<organism>
    <name type="scientific">Mycobacterium bovis (strain BCG / Tokyo 172 / ATCC 35737 / TMC 1019)</name>
    <dbReference type="NCBI Taxonomy" id="561275"/>
    <lineage>
        <taxon>Bacteria</taxon>
        <taxon>Bacillati</taxon>
        <taxon>Actinomycetota</taxon>
        <taxon>Actinomycetes</taxon>
        <taxon>Mycobacteriales</taxon>
        <taxon>Mycobacteriaceae</taxon>
        <taxon>Mycobacterium</taxon>
        <taxon>Mycobacterium tuberculosis complex</taxon>
    </lineage>
</organism>
<sequence>MARRPRPDGPQHLLALVRSAVPPVHPAGRPFIAAGLAIAAVGHRYRWLRGTGLLAAAACAGFFRHPQRVPPTRPAAIVAPADGVICAIDSAAPPAELSMGDTPLPRVSIFLSILDAHVQRAPVSGEVIAVQHRPGRFGSADLPEASDDNERTSVRIRMPNGAEVVAVQIAGLVARRIVCDAHVGDKLAIGDTYGLIRFGSRLDTYLPAGAEPIVNVGQRAVAGETVLAECR</sequence>
<evidence type="ECO:0000255" key="1">
    <source>
        <dbReference type="HAMAP-Rule" id="MF_00664"/>
    </source>
</evidence>
<proteinExistence type="inferred from homology"/>
<dbReference type="EC" id="4.1.1.65" evidence="1"/>
<dbReference type="EMBL" id="AP010918">
    <property type="protein sequence ID" value="BAH24742.1"/>
    <property type="molecule type" value="Genomic_DNA"/>
</dbReference>
<dbReference type="RefSeq" id="WP_003402216.1">
    <property type="nucleotide sequence ID" value="NZ_CP014566.1"/>
</dbReference>
<dbReference type="SMR" id="C1AKB3"/>
<dbReference type="KEGG" id="mbt:JTY_0446"/>
<dbReference type="HOGENOM" id="CLU_072492_0_0_11"/>
<dbReference type="UniPathway" id="UPA00558">
    <property type="reaction ID" value="UER00616"/>
</dbReference>
<dbReference type="GO" id="GO:0005886">
    <property type="term" value="C:plasma membrane"/>
    <property type="evidence" value="ECO:0007669"/>
    <property type="project" value="UniProtKB-SubCell"/>
</dbReference>
<dbReference type="GO" id="GO:0004609">
    <property type="term" value="F:phosphatidylserine decarboxylase activity"/>
    <property type="evidence" value="ECO:0007669"/>
    <property type="project" value="UniProtKB-UniRule"/>
</dbReference>
<dbReference type="GO" id="GO:0006646">
    <property type="term" value="P:phosphatidylethanolamine biosynthetic process"/>
    <property type="evidence" value="ECO:0007669"/>
    <property type="project" value="UniProtKB-UniRule"/>
</dbReference>
<dbReference type="HAMAP" id="MF_00664">
    <property type="entry name" value="PS_decarb_PSD_A"/>
    <property type="match status" value="1"/>
</dbReference>
<dbReference type="InterPro" id="IPR003817">
    <property type="entry name" value="PS_Dcarbxylase"/>
</dbReference>
<dbReference type="InterPro" id="IPR033175">
    <property type="entry name" value="PSD-A"/>
</dbReference>
<dbReference type="NCBIfam" id="NF003679">
    <property type="entry name" value="PRK05305.1-3"/>
    <property type="match status" value="1"/>
</dbReference>
<dbReference type="PANTHER" id="PTHR35809">
    <property type="entry name" value="ARCHAETIDYLSERINE DECARBOXYLASE PROENZYME-RELATED"/>
    <property type="match status" value="1"/>
</dbReference>
<dbReference type="PANTHER" id="PTHR35809:SF1">
    <property type="entry name" value="ARCHAETIDYLSERINE DECARBOXYLASE PROENZYME-RELATED"/>
    <property type="match status" value="1"/>
</dbReference>
<dbReference type="Pfam" id="PF02666">
    <property type="entry name" value="PS_Dcarbxylase"/>
    <property type="match status" value="1"/>
</dbReference>
<feature type="chain" id="PRO_1000192900" description="Phosphatidylserine decarboxylase beta chain" evidence="1">
    <location>
        <begin position="1"/>
        <end position="199"/>
    </location>
</feature>
<feature type="chain" id="PRO_1000192901" description="Phosphatidylserine decarboxylase alpha chain" evidence="1">
    <location>
        <begin position="200"/>
        <end position="231"/>
    </location>
</feature>
<feature type="active site" description="Schiff-base intermediate with substrate; via pyruvic acid" evidence="1">
    <location>
        <position position="200"/>
    </location>
</feature>
<feature type="site" description="Cleavage (non-hydrolytic); by autocatalysis" evidence="1">
    <location>
        <begin position="199"/>
        <end position="200"/>
    </location>
</feature>
<feature type="modified residue" description="Pyruvic acid (Ser); by autocatalysis" evidence="1">
    <location>
        <position position="200"/>
    </location>
</feature>
<protein>
    <recommendedName>
        <fullName evidence="1">Phosphatidylserine decarboxylase proenzyme</fullName>
        <ecNumber evidence="1">4.1.1.65</ecNumber>
    </recommendedName>
    <component>
        <recommendedName>
            <fullName evidence="1">Phosphatidylserine decarboxylase alpha chain</fullName>
        </recommendedName>
    </component>
    <component>
        <recommendedName>
            <fullName evidence="1">Phosphatidylserine decarboxylase beta chain</fullName>
        </recommendedName>
    </component>
</protein>
<gene>
    <name evidence="1" type="primary">psd</name>
    <name type="ordered locus">JTY_0446</name>
</gene>
<reference key="1">
    <citation type="journal article" date="2009" name="Vaccine">
        <title>Whole genome sequence analysis of Mycobacterium bovis bacillus Calmette-Guerin (BCG) Tokyo 172: a comparative study of BCG vaccine substrains.</title>
        <authorList>
            <person name="Seki M."/>
            <person name="Honda I."/>
            <person name="Fujita I."/>
            <person name="Yano I."/>
            <person name="Yamamoto S."/>
            <person name="Koyama A."/>
        </authorList>
    </citation>
    <scope>NUCLEOTIDE SEQUENCE [LARGE SCALE GENOMIC DNA]</scope>
    <source>
        <strain>BCG / Tokyo 172 / ATCC 35737 / TMC 1019</strain>
    </source>
</reference>
<accession>C1AKB3</accession>
<name>PSD_MYCBT</name>
<comment type="function">
    <text evidence="1">Catalyzes the formation of phosphatidylethanolamine (PtdEtn) from phosphatidylserine (PtdSer).</text>
</comment>
<comment type="catalytic activity">
    <reaction evidence="1">
        <text>a 1,2-diacyl-sn-glycero-3-phospho-L-serine + H(+) = a 1,2-diacyl-sn-glycero-3-phosphoethanolamine + CO2</text>
        <dbReference type="Rhea" id="RHEA:20828"/>
        <dbReference type="ChEBI" id="CHEBI:15378"/>
        <dbReference type="ChEBI" id="CHEBI:16526"/>
        <dbReference type="ChEBI" id="CHEBI:57262"/>
        <dbReference type="ChEBI" id="CHEBI:64612"/>
        <dbReference type="EC" id="4.1.1.65"/>
    </reaction>
</comment>
<comment type="cofactor">
    <cofactor evidence="1">
        <name>pyruvate</name>
        <dbReference type="ChEBI" id="CHEBI:15361"/>
    </cofactor>
    <text evidence="1">Binds 1 pyruvoyl group covalently per subunit.</text>
</comment>
<comment type="pathway">
    <text evidence="1">Phospholipid metabolism; phosphatidylethanolamine biosynthesis; phosphatidylethanolamine from CDP-diacylglycerol: step 2/2.</text>
</comment>
<comment type="subunit">
    <text evidence="1">Heterodimer of a large membrane-associated beta subunit and a small pyruvoyl-containing alpha subunit.</text>
</comment>
<comment type="subcellular location">
    <subcellularLocation>
        <location evidence="1">Cell membrane</location>
        <topology evidence="1">Peripheral membrane protein</topology>
    </subcellularLocation>
</comment>
<comment type="PTM">
    <text evidence="1">Is synthesized initially as an inactive proenzyme. Formation of the active enzyme involves a self-maturation process in which the active site pyruvoyl group is generated from an internal serine residue via an autocatalytic post-translational modification. Two non-identical subunits are generated from the proenzyme in this reaction, and the pyruvate is formed at the N-terminus of the alpha chain, which is derived from the carboxyl end of the proenzyme. The post-translation cleavage follows an unusual pathway, termed non-hydrolytic serinolysis, in which the side chain hydroxyl group of the serine supplies its oxygen atom to form the C-terminus of the beta chain, while the remainder of the serine residue undergoes an oxidative deamination to produce ammonia and the pyruvoyl prosthetic group on the alpha chain.</text>
</comment>
<comment type="similarity">
    <text evidence="1">Belongs to the phosphatidylserine decarboxylase family. PSD-A subfamily.</text>
</comment>
<keyword id="KW-1003">Cell membrane</keyword>
<keyword id="KW-0210">Decarboxylase</keyword>
<keyword id="KW-0444">Lipid biosynthesis</keyword>
<keyword id="KW-0443">Lipid metabolism</keyword>
<keyword id="KW-0456">Lyase</keyword>
<keyword id="KW-0472">Membrane</keyword>
<keyword id="KW-0594">Phospholipid biosynthesis</keyword>
<keyword id="KW-1208">Phospholipid metabolism</keyword>
<keyword id="KW-0670">Pyruvate</keyword>
<keyword id="KW-0865">Zymogen</keyword>